<reference key="1">
    <citation type="journal article" date="2009" name="Science">
        <title>The dynamics and time scale of ongoing genomic erosion in symbiotic bacteria.</title>
        <authorList>
            <person name="Moran N.A."/>
            <person name="McLaughlin H.J."/>
            <person name="Sorek R."/>
        </authorList>
    </citation>
    <scope>NUCLEOTIDE SEQUENCE [LARGE SCALE GENOMIC DNA]</scope>
    <source>
        <strain>Tuc7</strain>
    </source>
</reference>
<proteinExistence type="inferred from homology"/>
<comment type="similarity">
    <text evidence="1">Belongs to the universal ribosomal protein uL29 family.</text>
</comment>
<sequence length="65" mass="7749">MKALVGFRKKNKKDLYTELLQLLREQFNLRMQSVSGKLKQPHLLRKVRRNIAQVKTLLDSKEEIK</sequence>
<dbReference type="EMBL" id="CP001158">
    <property type="protein sequence ID" value="ACL30306.1"/>
    <property type="molecule type" value="Genomic_DNA"/>
</dbReference>
<dbReference type="RefSeq" id="WP_009874467.1">
    <property type="nucleotide sequence ID" value="NC_011834.1"/>
</dbReference>
<dbReference type="SMR" id="B8D841"/>
<dbReference type="KEGG" id="bau:BUAPTUC7_510"/>
<dbReference type="HOGENOM" id="CLU_158491_1_2_6"/>
<dbReference type="GO" id="GO:1990904">
    <property type="term" value="C:ribonucleoprotein complex"/>
    <property type="evidence" value="ECO:0007669"/>
    <property type="project" value="UniProtKB-KW"/>
</dbReference>
<dbReference type="GO" id="GO:0005840">
    <property type="term" value="C:ribosome"/>
    <property type="evidence" value="ECO:0007669"/>
    <property type="project" value="UniProtKB-KW"/>
</dbReference>
<dbReference type="GO" id="GO:0003735">
    <property type="term" value="F:structural constituent of ribosome"/>
    <property type="evidence" value="ECO:0007669"/>
    <property type="project" value="InterPro"/>
</dbReference>
<dbReference type="GO" id="GO:0006412">
    <property type="term" value="P:translation"/>
    <property type="evidence" value="ECO:0007669"/>
    <property type="project" value="UniProtKB-UniRule"/>
</dbReference>
<dbReference type="CDD" id="cd00427">
    <property type="entry name" value="Ribosomal_L29_HIP"/>
    <property type="match status" value="1"/>
</dbReference>
<dbReference type="FunFam" id="1.10.287.310:FF:000001">
    <property type="entry name" value="50S ribosomal protein L29"/>
    <property type="match status" value="1"/>
</dbReference>
<dbReference type="Gene3D" id="6.10.140.1970">
    <property type="match status" value="1"/>
</dbReference>
<dbReference type="HAMAP" id="MF_00374">
    <property type="entry name" value="Ribosomal_uL29"/>
    <property type="match status" value="1"/>
</dbReference>
<dbReference type="InterPro" id="IPR001854">
    <property type="entry name" value="Ribosomal_uL29"/>
</dbReference>
<dbReference type="InterPro" id="IPR018254">
    <property type="entry name" value="Ribosomal_uL29_CS"/>
</dbReference>
<dbReference type="InterPro" id="IPR036049">
    <property type="entry name" value="Ribosomal_uL29_sf"/>
</dbReference>
<dbReference type="NCBIfam" id="TIGR00012">
    <property type="entry name" value="L29"/>
    <property type="match status" value="1"/>
</dbReference>
<dbReference type="Pfam" id="PF00831">
    <property type="entry name" value="Ribosomal_L29"/>
    <property type="match status" value="1"/>
</dbReference>
<dbReference type="SUPFAM" id="SSF46561">
    <property type="entry name" value="Ribosomal protein L29 (L29p)"/>
    <property type="match status" value="1"/>
</dbReference>
<dbReference type="PROSITE" id="PS00579">
    <property type="entry name" value="RIBOSOMAL_L29"/>
    <property type="match status" value="1"/>
</dbReference>
<accession>B8D841</accession>
<feature type="chain" id="PRO_1000194001" description="Large ribosomal subunit protein uL29">
    <location>
        <begin position="1"/>
        <end position="65"/>
    </location>
</feature>
<name>RL29_BUCAT</name>
<organism>
    <name type="scientific">Buchnera aphidicola subsp. Acyrthosiphon pisum (strain Tuc7)</name>
    <dbReference type="NCBI Taxonomy" id="561501"/>
    <lineage>
        <taxon>Bacteria</taxon>
        <taxon>Pseudomonadati</taxon>
        <taxon>Pseudomonadota</taxon>
        <taxon>Gammaproteobacteria</taxon>
        <taxon>Enterobacterales</taxon>
        <taxon>Erwiniaceae</taxon>
        <taxon>Buchnera</taxon>
    </lineage>
</organism>
<keyword id="KW-0687">Ribonucleoprotein</keyword>
<keyword id="KW-0689">Ribosomal protein</keyword>
<protein>
    <recommendedName>
        <fullName evidence="1">Large ribosomal subunit protein uL29</fullName>
    </recommendedName>
    <alternativeName>
        <fullName evidence="2">50S ribosomal protein L29</fullName>
    </alternativeName>
</protein>
<evidence type="ECO:0000255" key="1">
    <source>
        <dbReference type="HAMAP-Rule" id="MF_00374"/>
    </source>
</evidence>
<evidence type="ECO:0000305" key="2"/>
<gene>
    <name evidence="1" type="primary">rpmC</name>
    <name type="ordered locus">BUAPTUC7_510</name>
</gene>